<sequence>MNQRRSESRPGNHRLQAYAEPGKGDSGGAGPLSGSARRGRGGGGAIRVRRPCWSGGAGRGGGPAWAVRLPTVTAGWTWPALRTLSSLRAGPSEPHSPGRRPPRAGRPLCQADPQPGKAARRSLEPDPAQTGPRPARAAGMSEARKGPDEAEESQYDSGIESLRSLRSLPESTSAPASGPSDGSPQPCTHPPGPVKEPQEKEDADGERADSTYGSSSLTYTLSLLGGPEAEDPAPRLPLPHVGALSPQQLEALTYISEDGDTLVHLAVIHEAPAVLLCCLALLPQEVLDIQNNLYQTALHLAVHLDQPGAVRALVLKGASRALQDRHGDTALHVACQRQHLACARCLLEGRPEPGRGTSHSLDLQLQNWQGLACLHIATLQKNQPLMELLLRNGADIDVQEGTSGKTALHLAVETQERGLVQFLLQAGAQVDARMLNGCTPLHLAAGRGLMGISSTLCKAGADSLLRNVEDETPQDLTEESLVLLPFDDLKISGKLLLCTD</sequence>
<reference key="1">
    <citation type="journal article" date="1997" name="EMBO J.">
        <title>IkappaB epsilon, a novel member of the IkappaB family, controls RelA and cRel NF-kappaB activity.</title>
        <authorList>
            <person name="Whiteside S.T."/>
            <person name="Epinat J.-C."/>
            <person name="Rice N.R."/>
            <person name="Israel A."/>
        </authorList>
    </citation>
    <scope>NUCLEOTIDE SEQUENCE [MRNA]</scope>
    <scope>FUNCTION</scope>
    <scope>SUBCELLULAR LOCATION</scope>
    <scope>MUTAGENESIS OF LYS-145; SER-157 AND SER-161</scope>
    <source>
        <tissue>Fetal brain</tissue>
    </source>
</reference>
<reference key="2">
    <citation type="journal article" date="2003" name="Nature">
        <title>The DNA sequence and analysis of human chromosome 6.</title>
        <authorList>
            <person name="Mungall A.J."/>
            <person name="Palmer S.A."/>
            <person name="Sims S.K."/>
            <person name="Edwards C.A."/>
            <person name="Ashurst J.L."/>
            <person name="Wilming L."/>
            <person name="Jones M.C."/>
            <person name="Horton R."/>
            <person name="Hunt S.E."/>
            <person name="Scott C.E."/>
            <person name="Gilbert J.G.R."/>
            <person name="Clamp M.E."/>
            <person name="Bethel G."/>
            <person name="Milne S."/>
            <person name="Ainscough R."/>
            <person name="Almeida J.P."/>
            <person name="Ambrose K.D."/>
            <person name="Andrews T.D."/>
            <person name="Ashwell R.I.S."/>
            <person name="Babbage A.K."/>
            <person name="Bagguley C.L."/>
            <person name="Bailey J."/>
            <person name="Banerjee R."/>
            <person name="Barker D.J."/>
            <person name="Barlow K.F."/>
            <person name="Bates K."/>
            <person name="Beare D.M."/>
            <person name="Beasley H."/>
            <person name="Beasley O."/>
            <person name="Bird C.P."/>
            <person name="Blakey S.E."/>
            <person name="Bray-Allen S."/>
            <person name="Brook J."/>
            <person name="Brown A.J."/>
            <person name="Brown J.Y."/>
            <person name="Burford D.C."/>
            <person name="Burrill W."/>
            <person name="Burton J."/>
            <person name="Carder C."/>
            <person name="Carter N.P."/>
            <person name="Chapman J.C."/>
            <person name="Clark S.Y."/>
            <person name="Clark G."/>
            <person name="Clee C.M."/>
            <person name="Clegg S."/>
            <person name="Cobley V."/>
            <person name="Collier R.E."/>
            <person name="Collins J.E."/>
            <person name="Colman L.K."/>
            <person name="Corby N.R."/>
            <person name="Coville G.J."/>
            <person name="Culley K.M."/>
            <person name="Dhami P."/>
            <person name="Davies J."/>
            <person name="Dunn M."/>
            <person name="Earthrowl M.E."/>
            <person name="Ellington A.E."/>
            <person name="Evans K.A."/>
            <person name="Faulkner L."/>
            <person name="Francis M.D."/>
            <person name="Frankish A."/>
            <person name="Frankland J."/>
            <person name="French L."/>
            <person name="Garner P."/>
            <person name="Garnett J."/>
            <person name="Ghori M.J."/>
            <person name="Gilby L.M."/>
            <person name="Gillson C.J."/>
            <person name="Glithero R.J."/>
            <person name="Grafham D.V."/>
            <person name="Grant M."/>
            <person name="Gribble S."/>
            <person name="Griffiths C."/>
            <person name="Griffiths M.N.D."/>
            <person name="Hall R."/>
            <person name="Halls K.S."/>
            <person name="Hammond S."/>
            <person name="Harley J.L."/>
            <person name="Hart E.A."/>
            <person name="Heath P.D."/>
            <person name="Heathcott R."/>
            <person name="Holmes S.J."/>
            <person name="Howden P.J."/>
            <person name="Howe K.L."/>
            <person name="Howell G.R."/>
            <person name="Huckle E."/>
            <person name="Humphray S.J."/>
            <person name="Humphries M.D."/>
            <person name="Hunt A.R."/>
            <person name="Johnson C.M."/>
            <person name="Joy A.A."/>
            <person name="Kay M."/>
            <person name="Keenan S.J."/>
            <person name="Kimberley A.M."/>
            <person name="King A."/>
            <person name="Laird G.K."/>
            <person name="Langford C."/>
            <person name="Lawlor S."/>
            <person name="Leongamornlert D.A."/>
            <person name="Leversha M."/>
            <person name="Lloyd C.R."/>
            <person name="Lloyd D.M."/>
            <person name="Loveland J.E."/>
            <person name="Lovell J."/>
            <person name="Martin S."/>
            <person name="Mashreghi-Mohammadi M."/>
            <person name="Maslen G.L."/>
            <person name="Matthews L."/>
            <person name="McCann O.T."/>
            <person name="McLaren S.J."/>
            <person name="McLay K."/>
            <person name="McMurray A."/>
            <person name="Moore M.J.F."/>
            <person name="Mullikin J.C."/>
            <person name="Niblett D."/>
            <person name="Nickerson T."/>
            <person name="Novik K.L."/>
            <person name="Oliver K."/>
            <person name="Overton-Larty E.K."/>
            <person name="Parker A."/>
            <person name="Patel R."/>
            <person name="Pearce A.V."/>
            <person name="Peck A.I."/>
            <person name="Phillimore B.J.C.T."/>
            <person name="Phillips S."/>
            <person name="Plumb R.W."/>
            <person name="Porter K.M."/>
            <person name="Ramsey Y."/>
            <person name="Ranby S.A."/>
            <person name="Rice C.M."/>
            <person name="Ross M.T."/>
            <person name="Searle S.M."/>
            <person name="Sehra H.K."/>
            <person name="Sheridan E."/>
            <person name="Skuce C.D."/>
            <person name="Smith S."/>
            <person name="Smith M."/>
            <person name="Spraggon L."/>
            <person name="Squares S.L."/>
            <person name="Steward C.A."/>
            <person name="Sycamore N."/>
            <person name="Tamlyn-Hall G."/>
            <person name="Tester J."/>
            <person name="Theaker A.J."/>
            <person name="Thomas D.W."/>
            <person name="Thorpe A."/>
            <person name="Tracey A."/>
            <person name="Tromans A."/>
            <person name="Tubby B."/>
            <person name="Wall M."/>
            <person name="Wallis J.M."/>
            <person name="West A.P."/>
            <person name="White S.S."/>
            <person name="Whitehead S.L."/>
            <person name="Whittaker H."/>
            <person name="Wild A."/>
            <person name="Willey D.J."/>
            <person name="Wilmer T.E."/>
            <person name="Wood J.M."/>
            <person name="Wray P.W."/>
            <person name="Wyatt J.C."/>
            <person name="Young L."/>
            <person name="Younger R.M."/>
            <person name="Bentley D.R."/>
            <person name="Coulson A."/>
            <person name="Durbin R.M."/>
            <person name="Hubbard T."/>
            <person name="Sulston J.E."/>
            <person name="Dunham I."/>
            <person name="Rogers J."/>
            <person name="Beck S."/>
        </authorList>
    </citation>
    <scope>NUCLEOTIDE SEQUENCE [LARGE SCALE GENOMIC DNA]</scope>
</reference>
<reference key="3">
    <citation type="submission" date="2005-07" db="EMBL/GenBank/DDBJ databases">
        <authorList>
            <person name="Mural R.J."/>
            <person name="Istrail S."/>
            <person name="Sutton G.G."/>
            <person name="Florea L."/>
            <person name="Halpern A.L."/>
            <person name="Mobarry C.M."/>
            <person name="Lippert R."/>
            <person name="Walenz B."/>
            <person name="Shatkay H."/>
            <person name="Dew I."/>
            <person name="Miller J.R."/>
            <person name="Flanigan M.J."/>
            <person name="Edwards N.J."/>
            <person name="Bolanos R."/>
            <person name="Fasulo D."/>
            <person name="Halldorsson B.V."/>
            <person name="Hannenhalli S."/>
            <person name="Turner R."/>
            <person name="Yooseph S."/>
            <person name="Lu F."/>
            <person name="Nusskern D.R."/>
            <person name="Shue B.C."/>
            <person name="Zheng X.H."/>
            <person name="Zhong F."/>
            <person name="Delcher A.L."/>
            <person name="Huson D.H."/>
            <person name="Kravitz S.A."/>
            <person name="Mouchard L."/>
            <person name="Reinert K."/>
            <person name="Remington K.A."/>
            <person name="Clark A.G."/>
            <person name="Waterman M.S."/>
            <person name="Eichler E.E."/>
            <person name="Adams M.D."/>
            <person name="Hunkapiller M.W."/>
            <person name="Myers E.W."/>
            <person name="Venter J.C."/>
        </authorList>
    </citation>
    <scope>NUCLEOTIDE SEQUENCE [LARGE SCALE GENOMIC DNA]</scope>
</reference>
<reference key="4">
    <citation type="journal article" date="1997" name="Mol. Cell. Biol.">
        <title>A new member of the IkappaB protein family, IkappaB epsilon, inhibits RelA (p65)-mediated NF-kappaB transcription.</title>
        <authorList>
            <person name="Li Z."/>
            <person name="Nabel G.J."/>
        </authorList>
    </citation>
    <scope>NUCLEOTIDE SEQUENCE [MRNA] OF 140-500</scope>
    <scope>FUNCTION</scope>
    <scope>INTERACTION WITH RELA; REL; NFKB1 AND NFKB2</scope>
    <source>
        <tissue>B-cell</tissue>
    </source>
</reference>
<reference key="5">
    <citation type="journal article" date="2013" name="J. Proteome Res.">
        <title>Toward a comprehensive characterization of a human cancer cell phosphoproteome.</title>
        <authorList>
            <person name="Zhou H."/>
            <person name="Di Palma S."/>
            <person name="Preisinger C."/>
            <person name="Peng M."/>
            <person name="Polat A.N."/>
            <person name="Heck A.J."/>
            <person name="Mohammed S."/>
        </authorList>
    </citation>
    <scope>PHOSPHORYLATION [LARGE SCALE ANALYSIS] AT SER-157 AND SER-183</scope>
    <scope>IDENTIFICATION BY MASS SPECTROMETRY [LARGE SCALE ANALYSIS]</scope>
    <source>
        <tissue>Cervix carcinoma</tissue>
        <tissue>Erythroleukemia</tissue>
    </source>
</reference>
<reference key="6">
    <citation type="journal article" date="2023" name="Elife">
        <title>FAM76B regulates NF-kappaB-mediated inflammatory pathway by influencing the translocation of hnRNPA2B1.</title>
        <authorList>
            <person name="Wang D."/>
            <person name="Zheng X."/>
            <person name="Chai L."/>
            <person name="Zhao J."/>
            <person name="Zhu J."/>
            <person name="Li Y."/>
            <person name="Yang P."/>
            <person name="Mao Q."/>
            <person name="Xia H."/>
        </authorList>
    </citation>
    <scope>INTERACTION WITH HNRNPA2B1</scope>
</reference>
<organism>
    <name type="scientific">Homo sapiens</name>
    <name type="common">Human</name>
    <dbReference type="NCBI Taxonomy" id="9606"/>
    <lineage>
        <taxon>Eukaryota</taxon>
        <taxon>Metazoa</taxon>
        <taxon>Chordata</taxon>
        <taxon>Craniata</taxon>
        <taxon>Vertebrata</taxon>
        <taxon>Euteleostomi</taxon>
        <taxon>Mammalia</taxon>
        <taxon>Eutheria</taxon>
        <taxon>Euarchontoglires</taxon>
        <taxon>Primates</taxon>
        <taxon>Haplorrhini</taxon>
        <taxon>Catarrhini</taxon>
        <taxon>Hominidae</taxon>
        <taxon>Homo</taxon>
    </lineage>
</organism>
<keyword id="KW-0040">ANK repeat</keyword>
<keyword id="KW-0963">Cytoplasm</keyword>
<keyword id="KW-0597">Phosphoprotein</keyword>
<keyword id="KW-1267">Proteomics identification</keyword>
<keyword id="KW-1185">Reference proteome</keyword>
<keyword id="KW-0677">Repeat</keyword>
<comment type="function">
    <text evidence="1 4 5">Sequesters NF-kappa-B transcription factor complexes in the cytoplasm, thereby inhibiting their activity (PubMed:9315679). Sequestered complexes include NFKB1-RELA (p50-p65) and NFKB1-REL (p50-c-Rel) complexes (PubMed:9135156, PubMed:9315679). Limits B-cell activation in response to pathogens, and also plays an important role in B-cell development (By similarity).</text>
</comment>
<comment type="subunit">
    <text evidence="3 5">Interacts with RELA, REL, NFKB1 nuclear factor NF-kappa-B p50 subunit and NFKB2 nuclear factor NF-kappa-B p52 subunit (PubMed:9315679). Interacts with HNRNPA2B1; the interaction may be mediated by the RRM2 domain of HNRNPA2B1, and HNRNPA2B1 may interact simultaneously with FAM76B and either NFKBIA or NFKBIE to form a complex (PubMed:37643469).</text>
</comment>
<comment type="interaction">
    <interactant intactId="EBI-355098">
        <id>O00221</id>
    </interactant>
    <interactant intactId="EBI-359558">
        <id>Q8IWZ3</id>
        <label>ANKHD1</label>
    </interactant>
    <organismsDiffer>false</organismsDiffer>
    <experiments>2</experiments>
</comment>
<comment type="interaction">
    <interactant intactId="EBI-355098">
        <id>O00221</id>
    </interactant>
    <interactant intactId="EBI-13317659">
        <id>P0DPF6</id>
        <label>CDRT15P3</label>
    </interactant>
    <organismsDiffer>false</organismsDiffer>
    <experiments>3</experiments>
</comment>
<comment type="interaction">
    <interactant intactId="EBI-355098">
        <id>O00221</id>
    </interactant>
    <interactant intactId="EBI-359745">
        <id>Q9UPN7</id>
        <label>PPP6R1</label>
    </interactant>
    <organismsDiffer>false</organismsDiffer>
    <experiments>2</experiments>
</comment>
<comment type="interaction">
    <interactant intactId="EBI-355098">
        <id>O00221</id>
    </interactant>
    <interactant intactId="EBI-359739">
        <id>O75170</id>
        <label>PPP6R2</label>
    </interactant>
    <organismsDiffer>false</organismsDiffer>
    <experiments>2</experiments>
</comment>
<comment type="interaction">
    <interactant intactId="EBI-355098">
        <id>O00221</id>
    </interactant>
    <interactant intactId="EBI-307352">
        <id>Q04864</id>
        <label>REL</label>
    </interactant>
    <organismsDiffer>false</organismsDiffer>
    <experiments>4</experiments>
</comment>
<comment type="interaction">
    <interactant intactId="EBI-355098">
        <id>O00221</id>
    </interactant>
    <interactant intactId="EBI-73886">
        <id>Q04206</id>
        <label>RELA</label>
    </interactant>
    <organismsDiffer>false</organismsDiffer>
    <experiments>3</experiments>
</comment>
<comment type="subcellular location">
    <subcellularLocation>
        <location evidence="4">Cytoplasm</location>
    </subcellularLocation>
</comment>
<comment type="tissue specificity">
    <text>Highly expressed in spleen, testis and lung, followed by kidney, pancreas, heart, placenta and brain. Also expressed in granulocytes and macrophages.</text>
</comment>
<comment type="PTM">
    <text>Serine phosphorylated; followed by proteasome-dependent degradation.</text>
</comment>
<comment type="similarity">
    <text evidence="6">Belongs to the NF-kappa-B inhibitor family.</text>
</comment>
<comment type="sequence caution" evidence="6">
    <conflict type="frameshift">
        <sequence resource="EMBL-CDS" id="AAC51216"/>
    </conflict>
</comment>
<accession>O00221</accession>
<accession>Q5T9V9</accession>
<evidence type="ECO:0000250" key="1">
    <source>
        <dbReference type="UniProtKB" id="O54910"/>
    </source>
</evidence>
<evidence type="ECO:0000256" key="2">
    <source>
        <dbReference type="SAM" id="MobiDB-lite"/>
    </source>
</evidence>
<evidence type="ECO:0000269" key="3">
    <source>
    </source>
</evidence>
<evidence type="ECO:0000269" key="4">
    <source>
    </source>
</evidence>
<evidence type="ECO:0000269" key="5">
    <source>
    </source>
</evidence>
<evidence type="ECO:0000305" key="6"/>
<evidence type="ECO:0007744" key="7">
    <source>
    </source>
</evidence>
<protein>
    <recommendedName>
        <fullName>NF-kappa-B inhibitor epsilon</fullName>
        <shortName>NF-kappa-BIE</shortName>
    </recommendedName>
    <alternativeName>
        <fullName>I-kappa-B-epsilon</fullName>
        <shortName>IkB-E</shortName>
        <shortName>IkB-epsilon</shortName>
        <shortName>IkappaBepsilon</shortName>
    </alternativeName>
</protein>
<gene>
    <name type="primary">NFKBIE</name>
    <name type="synonym">IKBE</name>
</gene>
<feature type="chain" id="PRO_0000067007" description="NF-kappa-B inhibitor epsilon">
    <location>
        <begin position="1"/>
        <end position="500"/>
    </location>
</feature>
<feature type="repeat" description="ANK 1">
    <location>
        <begin position="258"/>
        <end position="291"/>
    </location>
</feature>
<feature type="repeat" description="ANK 2">
    <location>
        <begin position="293"/>
        <end position="322"/>
    </location>
</feature>
<feature type="repeat" description="ANK 3">
    <location>
        <begin position="326"/>
        <end position="355"/>
    </location>
</feature>
<feature type="repeat" description="ANK 4">
    <location>
        <begin position="369"/>
        <end position="398"/>
    </location>
</feature>
<feature type="repeat" description="ANK 5">
    <location>
        <begin position="403"/>
        <end position="432"/>
    </location>
</feature>
<feature type="repeat" description="ANK 6">
    <location>
        <begin position="436"/>
        <end position="465"/>
    </location>
</feature>
<feature type="region of interest" description="Disordered" evidence="2">
    <location>
        <begin position="1"/>
        <end position="66"/>
    </location>
</feature>
<feature type="region of interest" description="Disordered" evidence="2">
    <location>
        <begin position="84"/>
        <end position="215"/>
    </location>
</feature>
<feature type="region of interest" description="Disordered" evidence="2">
    <location>
        <begin position="222"/>
        <end position="241"/>
    </location>
</feature>
<feature type="compositionally biased region" description="Basic and acidic residues" evidence="2">
    <location>
        <begin position="1"/>
        <end position="10"/>
    </location>
</feature>
<feature type="compositionally biased region" description="Low complexity" evidence="2">
    <location>
        <begin position="161"/>
        <end position="186"/>
    </location>
</feature>
<feature type="compositionally biased region" description="Basic and acidic residues" evidence="2">
    <location>
        <begin position="196"/>
        <end position="209"/>
    </location>
</feature>
<feature type="modified residue" description="Phosphoserine" evidence="7">
    <location>
        <position position="157"/>
    </location>
</feature>
<feature type="modified residue" description="Phosphoserine" evidence="6">
    <location>
        <position position="161"/>
    </location>
</feature>
<feature type="modified residue" description="Phosphoserine" evidence="7">
    <location>
        <position position="183"/>
    </location>
</feature>
<feature type="sequence variant" id="VAR_046631" description="In dbSNP:rs28362857.">
    <original>H</original>
    <variation>Q</variation>
    <location>
        <position position="95"/>
    </location>
</feature>
<feature type="sequence variant" id="VAR_046632" description="In dbSNP:rs2233434.">
    <original>V</original>
    <variation>A</variation>
    <location>
        <position position="194"/>
    </location>
</feature>
<feature type="mutagenesis site" description="No effect." evidence="4">
    <original>K</original>
    <variation>R</variation>
    <location>
        <position position="145"/>
    </location>
</feature>
<feature type="mutagenesis site" description="No degradation." evidence="4">
    <original>S</original>
    <variation>A</variation>
    <location>
        <position position="157"/>
    </location>
</feature>
<feature type="mutagenesis site" description="No degradation." evidence="4">
    <original>S</original>
    <variation>A</variation>
    <location>
        <position position="161"/>
    </location>
</feature>
<feature type="sequence conflict" description="In Ref. 1; AAC51216." evidence="6" ref="1">
    <original>PA</original>
    <variation>RP</variation>
    <location>
        <begin position="63"/>
        <end position="64"/>
    </location>
</feature>
<feature type="sequence conflict" description="In Ref. 1; AAC51216." evidence="6" ref="1">
    <original>P</original>
    <variation>R</variation>
    <location>
        <position position="101"/>
    </location>
</feature>
<feature type="sequence conflict" description="In Ref. 1; AAC51216." evidence="6" ref="1">
    <original>A</original>
    <variation>P</variation>
    <location>
        <position position="233"/>
    </location>
</feature>
<feature type="sequence conflict" description="In Ref. 1; AAC51216." evidence="6" ref="1">
    <original>T</original>
    <variation>S</variation>
    <location>
        <position position="402"/>
    </location>
</feature>
<name>IKBE_HUMAN</name>
<dbReference type="EMBL" id="U91616">
    <property type="protein sequence ID" value="AAC51216.1"/>
    <property type="status" value="ALT_FRAME"/>
    <property type="molecule type" value="mRNA"/>
</dbReference>
<dbReference type="EMBL" id="AL139392">
    <property type="status" value="NOT_ANNOTATED_CDS"/>
    <property type="molecule type" value="Genomic_DNA"/>
</dbReference>
<dbReference type="EMBL" id="CH471081">
    <property type="protein sequence ID" value="EAX04262.1"/>
    <property type="molecule type" value="Genomic_DNA"/>
</dbReference>
<dbReference type="RefSeq" id="NP_004547.2">
    <property type="nucleotide sequence ID" value="NM_004556.2"/>
</dbReference>
<dbReference type="SMR" id="O00221"/>
<dbReference type="BioGRID" id="110861">
    <property type="interactions" value="36"/>
</dbReference>
<dbReference type="CORUM" id="O00221"/>
<dbReference type="DIP" id="DIP-27533N"/>
<dbReference type="ELM" id="O00221"/>
<dbReference type="FunCoup" id="O00221">
    <property type="interactions" value="1256"/>
</dbReference>
<dbReference type="IntAct" id="O00221">
    <property type="interactions" value="28"/>
</dbReference>
<dbReference type="MINT" id="O00221"/>
<dbReference type="STRING" id="9606.ENSP00000275015"/>
<dbReference type="ChEMBL" id="CHEMBL3407"/>
<dbReference type="GlyGen" id="O00221">
    <property type="glycosylation" value="1 site, 1 O-linked glycan (1 site)"/>
</dbReference>
<dbReference type="iPTMnet" id="O00221"/>
<dbReference type="PhosphoSitePlus" id="O00221"/>
<dbReference type="BioMuta" id="NFKBIE"/>
<dbReference type="jPOST" id="O00221"/>
<dbReference type="MassIVE" id="O00221"/>
<dbReference type="PaxDb" id="9606-ENSP00000275015"/>
<dbReference type="PeptideAtlas" id="O00221"/>
<dbReference type="ProteomicsDB" id="47791"/>
<dbReference type="Pumba" id="O00221"/>
<dbReference type="Antibodypedia" id="800">
    <property type="antibodies" value="494 antibodies from 37 providers"/>
</dbReference>
<dbReference type="DNASU" id="4794"/>
<dbReference type="Ensembl" id="ENST00000275015.9">
    <property type="protein sequence ID" value="ENSP00000275015.3"/>
    <property type="gene ID" value="ENSG00000146232.17"/>
</dbReference>
<dbReference type="GeneID" id="4794"/>
<dbReference type="KEGG" id="hsa:4794"/>
<dbReference type="UCSC" id="uc003oxe.1">
    <property type="organism name" value="human"/>
</dbReference>
<dbReference type="AGR" id="HGNC:7799"/>
<dbReference type="CTD" id="4794"/>
<dbReference type="DisGeNET" id="4794"/>
<dbReference type="GeneCards" id="NFKBIE"/>
<dbReference type="HGNC" id="HGNC:7799">
    <property type="gene designation" value="NFKBIE"/>
</dbReference>
<dbReference type="HPA" id="ENSG00000146232">
    <property type="expression patterns" value="Tissue enhanced (lymphoid)"/>
</dbReference>
<dbReference type="MIM" id="604548">
    <property type="type" value="gene"/>
</dbReference>
<dbReference type="neXtProt" id="NX_O00221"/>
<dbReference type="OpenTargets" id="ENSG00000146232"/>
<dbReference type="PharmGKB" id="PA31603"/>
<dbReference type="VEuPathDB" id="HostDB:ENSG00000146232"/>
<dbReference type="eggNOG" id="KOG0504">
    <property type="taxonomic scope" value="Eukaryota"/>
</dbReference>
<dbReference type="GeneTree" id="ENSGT00940000159120"/>
<dbReference type="InParanoid" id="O00221"/>
<dbReference type="OrthoDB" id="10254947at2759"/>
<dbReference type="PAN-GO" id="O00221">
    <property type="GO annotations" value="1 GO annotation based on evolutionary models"/>
</dbReference>
<dbReference type="PhylomeDB" id="O00221"/>
<dbReference type="TreeFam" id="TF320166"/>
<dbReference type="PathwayCommons" id="O00221"/>
<dbReference type="Reactome" id="R-HSA-1169091">
    <property type="pathway name" value="Activation of NF-kappaB in B cells"/>
</dbReference>
<dbReference type="SignaLink" id="O00221"/>
<dbReference type="SIGNOR" id="O00221"/>
<dbReference type="BioGRID-ORCS" id="4794">
    <property type="hits" value="166 hits in 1156 CRISPR screens"/>
</dbReference>
<dbReference type="ChiTaRS" id="NFKBIE">
    <property type="organism name" value="human"/>
</dbReference>
<dbReference type="GeneWiki" id="NFKBIE"/>
<dbReference type="GenomeRNAi" id="4794"/>
<dbReference type="Pharos" id="O00221">
    <property type="development level" value="Tbio"/>
</dbReference>
<dbReference type="PRO" id="PR:O00221"/>
<dbReference type="Proteomes" id="UP000005640">
    <property type="component" value="Chromosome 6"/>
</dbReference>
<dbReference type="RNAct" id="O00221">
    <property type="molecule type" value="protein"/>
</dbReference>
<dbReference type="Bgee" id="ENSG00000146232">
    <property type="expression patterns" value="Expressed in primordial germ cell in gonad and 109 other cell types or tissues"/>
</dbReference>
<dbReference type="ExpressionAtlas" id="O00221">
    <property type="expression patterns" value="baseline and differential"/>
</dbReference>
<dbReference type="GO" id="GO:0005737">
    <property type="term" value="C:cytoplasm"/>
    <property type="evidence" value="ECO:0000314"/>
    <property type="project" value="UniProtKB"/>
</dbReference>
<dbReference type="GO" id="GO:0005829">
    <property type="term" value="C:cytosol"/>
    <property type="evidence" value="ECO:0000314"/>
    <property type="project" value="HPA"/>
</dbReference>
<dbReference type="GO" id="GO:0001650">
    <property type="term" value="C:fibrillar center"/>
    <property type="evidence" value="ECO:0000314"/>
    <property type="project" value="HPA"/>
</dbReference>
<dbReference type="GO" id="GO:0005654">
    <property type="term" value="C:nucleoplasm"/>
    <property type="evidence" value="ECO:0000314"/>
    <property type="project" value="HPA"/>
</dbReference>
<dbReference type="GO" id="GO:0140311">
    <property type="term" value="F:protein sequestering activity"/>
    <property type="evidence" value="ECO:0000314"/>
    <property type="project" value="UniProtKB"/>
</dbReference>
<dbReference type="FunFam" id="1.25.40.20:FF:000237">
    <property type="entry name" value="NF-kappa-B inhibitor epsilon"/>
    <property type="match status" value="1"/>
</dbReference>
<dbReference type="Gene3D" id="1.25.40.20">
    <property type="entry name" value="Ankyrin repeat-containing domain"/>
    <property type="match status" value="1"/>
</dbReference>
<dbReference type="InterPro" id="IPR002110">
    <property type="entry name" value="Ankyrin_rpt"/>
</dbReference>
<dbReference type="InterPro" id="IPR036770">
    <property type="entry name" value="Ankyrin_rpt-contain_sf"/>
</dbReference>
<dbReference type="InterPro" id="IPR051070">
    <property type="entry name" value="NF-kappa-B_inhibitor"/>
</dbReference>
<dbReference type="PANTHER" id="PTHR46680">
    <property type="entry name" value="NF-KAPPA-B INHIBITOR ALPHA"/>
    <property type="match status" value="1"/>
</dbReference>
<dbReference type="PANTHER" id="PTHR46680:SF5">
    <property type="entry name" value="NFKB INHIBITOR EPSILON"/>
    <property type="match status" value="1"/>
</dbReference>
<dbReference type="Pfam" id="PF12796">
    <property type="entry name" value="Ank_2"/>
    <property type="match status" value="2"/>
</dbReference>
<dbReference type="PRINTS" id="PR01415">
    <property type="entry name" value="ANKYRIN"/>
</dbReference>
<dbReference type="SMART" id="SM00248">
    <property type="entry name" value="ANK"/>
    <property type="match status" value="6"/>
</dbReference>
<dbReference type="SUPFAM" id="SSF48403">
    <property type="entry name" value="Ankyrin repeat"/>
    <property type="match status" value="1"/>
</dbReference>
<dbReference type="PROSITE" id="PS50297">
    <property type="entry name" value="ANK_REP_REGION"/>
    <property type="match status" value="1"/>
</dbReference>
<dbReference type="PROSITE" id="PS50088">
    <property type="entry name" value="ANK_REPEAT"/>
    <property type="match status" value="3"/>
</dbReference>
<proteinExistence type="evidence at protein level"/>